<accession>B1YCL7</accession>
<comment type="catalytic activity">
    <reaction evidence="1">
        <text>beta-nicotinamide D-ribonucleotide + ATP + H(+) = diphosphate + NAD(+)</text>
        <dbReference type="Rhea" id="RHEA:21360"/>
        <dbReference type="ChEBI" id="CHEBI:14649"/>
        <dbReference type="ChEBI" id="CHEBI:15378"/>
        <dbReference type="ChEBI" id="CHEBI:30616"/>
        <dbReference type="ChEBI" id="CHEBI:33019"/>
        <dbReference type="ChEBI" id="CHEBI:57540"/>
        <dbReference type="EC" id="2.7.7.1"/>
    </reaction>
</comment>
<comment type="pathway">
    <text evidence="1">Cofactor biosynthesis; NAD(+) biosynthesis; NAD(+) from nicotinamide D-ribonucleotide: step 1/1.</text>
</comment>
<comment type="subcellular location">
    <subcellularLocation>
        <location evidence="1">Cytoplasm</location>
    </subcellularLocation>
</comment>
<comment type="similarity">
    <text evidence="1">Belongs to the archaeal NMN adenylyltransferase family.</text>
</comment>
<keyword id="KW-0067">ATP-binding</keyword>
<keyword id="KW-0963">Cytoplasm</keyword>
<keyword id="KW-0520">NAD</keyword>
<keyword id="KW-0547">Nucleotide-binding</keyword>
<keyword id="KW-0548">Nucleotidyltransferase</keyword>
<keyword id="KW-0662">Pyridine nucleotide biosynthesis</keyword>
<keyword id="KW-0808">Transferase</keyword>
<proteinExistence type="inferred from homology"/>
<organism>
    <name type="scientific">Pyrobaculum neutrophilum (strain DSM 2338 / JCM 9278 / NBRC 100436 / V24Sta)</name>
    <name type="common">Thermoproteus neutrophilus</name>
    <dbReference type="NCBI Taxonomy" id="444157"/>
    <lineage>
        <taxon>Archaea</taxon>
        <taxon>Thermoproteota</taxon>
        <taxon>Thermoprotei</taxon>
        <taxon>Thermoproteales</taxon>
        <taxon>Thermoproteaceae</taxon>
        <taxon>Pyrobaculum</taxon>
    </lineage>
</organism>
<dbReference type="EC" id="2.7.7.1" evidence="1"/>
<dbReference type="EMBL" id="CP001014">
    <property type="protein sequence ID" value="ACB39530.1"/>
    <property type="molecule type" value="Genomic_DNA"/>
</dbReference>
<dbReference type="RefSeq" id="WP_012349950.1">
    <property type="nucleotide sequence ID" value="NC_010525.1"/>
</dbReference>
<dbReference type="SMR" id="B1YCL7"/>
<dbReference type="STRING" id="444157.Tneu_0591"/>
<dbReference type="GeneID" id="6165599"/>
<dbReference type="KEGG" id="tne:Tneu_0591"/>
<dbReference type="eggNOG" id="arCOG00972">
    <property type="taxonomic scope" value="Archaea"/>
</dbReference>
<dbReference type="HOGENOM" id="CLU_108783_0_0_2"/>
<dbReference type="OrthoDB" id="264480at2157"/>
<dbReference type="UniPathway" id="UPA00253">
    <property type="reaction ID" value="UER00600"/>
</dbReference>
<dbReference type="Proteomes" id="UP000001694">
    <property type="component" value="Chromosome"/>
</dbReference>
<dbReference type="GO" id="GO:0005737">
    <property type="term" value="C:cytoplasm"/>
    <property type="evidence" value="ECO:0007669"/>
    <property type="project" value="UniProtKB-SubCell"/>
</dbReference>
<dbReference type="GO" id="GO:0005524">
    <property type="term" value="F:ATP binding"/>
    <property type="evidence" value="ECO:0007669"/>
    <property type="project" value="UniProtKB-KW"/>
</dbReference>
<dbReference type="GO" id="GO:0000309">
    <property type="term" value="F:nicotinamide-nucleotide adenylyltransferase activity"/>
    <property type="evidence" value="ECO:0007669"/>
    <property type="project" value="UniProtKB-UniRule"/>
</dbReference>
<dbReference type="GO" id="GO:0009435">
    <property type="term" value="P:NAD biosynthetic process"/>
    <property type="evidence" value="ECO:0007669"/>
    <property type="project" value="UniProtKB-UniRule"/>
</dbReference>
<dbReference type="CDD" id="cd02166">
    <property type="entry name" value="NMNAT_Archaea"/>
    <property type="match status" value="1"/>
</dbReference>
<dbReference type="Gene3D" id="3.40.50.620">
    <property type="entry name" value="HUPs"/>
    <property type="match status" value="1"/>
</dbReference>
<dbReference type="HAMAP" id="MF_00243">
    <property type="entry name" value="NMN_adenylyltr"/>
    <property type="match status" value="1"/>
</dbReference>
<dbReference type="InterPro" id="IPR004821">
    <property type="entry name" value="Cyt_trans-like"/>
</dbReference>
<dbReference type="InterPro" id="IPR006418">
    <property type="entry name" value="NMN_Atrans_arc"/>
</dbReference>
<dbReference type="InterPro" id="IPR014729">
    <property type="entry name" value="Rossmann-like_a/b/a_fold"/>
</dbReference>
<dbReference type="NCBIfam" id="TIGR01527">
    <property type="entry name" value="arch_NMN_Atrans"/>
    <property type="match status" value="1"/>
</dbReference>
<dbReference type="NCBIfam" id="TIGR00125">
    <property type="entry name" value="cyt_tran_rel"/>
    <property type="match status" value="1"/>
</dbReference>
<dbReference type="NCBIfam" id="NF002243">
    <property type="entry name" value="PRK01153.1"/>
    <property type="match status" value="1"/>
</dbReference>
<dbReference type="PANTHER" id="PTHR21342:SF0">
    <property type="entry name" value="BIFUNCTIONAL NMN ADENYLYLTRANSFERASE_NUDIX HYDROLASE"/>
    <property type="match status" value="1"/>
</dbReference>
<dbReference type="PANTHER" id="PTHR21342">
    <property type="entry name" value="PHOSPHOPANTETHEINE ADENYLYLTRANSFERASE"/>
    <property type="match status" value="1"/>
</dbReference>
<dbReference type="Pfam" id="PF01467">
    <property type="entry name" value="CTP_transf_like"/>
    <property type="match status" value="1"/>
</dbReference>
<dbReference type="SUPFAM" id="SSF52374">
    <property type="entry name" value="Nucleotidylyl transferase"/>
    <property type="match status" value="1"/>
</dbReference>
<protein>
    <recommendedName>
        <fullName evidence="1">Nicotinamide-nucleotide adenylyltransferase</fullName>
        <ecNumber evidence="1">2.7.7.1</ecNumber>
    </recommendedName>
    <alternativeName>
        <fullName evidence="1">NAD(+) diphosphorylase</fullName>
    </alternativeName>
    <alternativeName>
        <fullName evidence="1">NAD(+) pyrophosphorylase</fullName>
    </alternativeName>
    <alternativeName>
        <fullName evidence="1">NMN adenylyltransferase</fullName>
    </alternativeName>
</protein>
<gene>
    <name type="ordered locus">Tneu_0591</name>
</gene>
<sequence length="178" mass="20479">MKRALFPGRFQPPHWGHVYAIREVLKEVDELVVAVGSAQFNYIAKDPFTAGERIWMLREALREAGVDLSRVCTIPIPNVENNLEWLGRVKSYAPPFQVVYTGNPYVALLFREAGYEVRQQPMYQRERYSSTRVRELLMRGDPQWEELVPRSVAEIIKAIGGAERLRIAAAGEAEPHRW</sequence>
<feature type="chain" id="PRO_1000100757" description="Nicotinamide-nucleotide adenylyltransferase">
    <location>
        <begin position="1"/>
        <end position="178"/>
    </location>
</feature>
<reference key="1">
    <citation type="submission" date="2008-03" db="EMBL/GenBank/DDBJ databases">
        <title>Complete sequence of Thermoproteus neutrophilus V24Sta.</title>
        <authorList>
            <consortium name="US DOE Joint Genome Institute"/>
            <person name="Copeland A."/>
            <person name="Lucas S."/>
            <person name="Lapidus A."/>
            <person name="Glavina del Rio T."/>
            <person name="Dalin E."/>
            <person name="Tice H."/>
            <person name="Bruce D."/>
            <person name="Goodwin L."/>
            <person name="Pitluck S."/>
            <person name="Sims D."/>
            <person name="Brettin T."/>
            <person name="Detter J.C."/>
            <person name="Han C."/>
            <person name="Kuske C.R."/>
            <person name="Schmutz J."/>
            <person name="Larimer F."/>
            <person name="Land M."/>
            <person name="Hauser L."/>
            <person name="Kyrpides N."/>
            <person name="Mikhailova N."/>
            <person name="Biddle J.F."/>
            <person name="Zhang Z."/>
            <person name="Fitz-Gibbon S.T."/>
            <person name="Lowe T.M."/>
            <person name="Saltikov C."/>
            <person name="House C.H."/>
            <person name="Richardson P."/>
        </authorList>
    </citation>
    <scope>NUCLEOTIDE SEQUENCE [LARGE SCALE GENOMIC DNA]</scope>
    <source>
        <strain>DSM 2338 / JCM 9278 / NBRC 100436 / V24Sta</strain>
    </source>
</reference>
<name>NADM_PYRNV</name>
<evidence type="ECO:0000255" key="1">
    <source>
        <dbReference type="HAMAP-Rule" id="MF_00243"/>
    </source>
</evidence>